<evidence type="ECO:0000250" key="1"/>
<evidence type="ECO:0000250" key="2">
    <source>
        <dbReference type="UniProtKB" id="P53882"/>
    </source>
</evidence>
<evidence type="ECO:0000255" key="3"/>
<evidence type="ECO:0000256" key="4">
    <source>
        <dbReference type="SAM" id="MobiDB-lite"/>
    </source>
</evidence>
<evidence type="ECO:0000305" key="5"/>
<reference key="1">
    <citation type="journal article" date="2011" name="PLoS Genet.">
        <title>Whole-genome comparison reveals novel genetic elements that characterize the genome of industrial strains of Saccharomyces cerevisiae.</title>
        <authorList>
            <person name="Borneman A.R."/>
            <person name="Desany B.A."/>
            <person name="Riches D."/>
            <person name="Affourtit J.P."/>
            <person name="Forgan A.H."/>
            <person name="Pretorius I.S."/>
            <person name="Egholm M."/>
            <person name="Chambers P.J."/>
        </authorList>
    </citation>
    <scope>NUCLEOTIDE SEQUENCE [LARGE SCALE GENOMIC DNA]</scope>
    <source>
        <strain>AWRI796</strain>
    </source>
</reference>
<name>TDA7_YEASA</name>
<proteinExistence type="inferred from homology"/>
<keyword id="KW-0325">Glycoprotein</keyword>
<keyword id="KW-1017">Isopeptide bond</keyword>
<keyword id="KW-0472">Membrane</keyword>
<keyword id="KW-0597">Phosphoprotein</keyword>
<keyword id="KW-0812">Transmembrane</keyword>
<keyword id="KW-1133">Transmembrane helix</keyword>
<keyword id="KW-0832">Ubl conjugation</keyword>
<keyword id="KW-0926">Vacuole</keyword>
<feature type="chain" id="PRO_0000410751" description="Topoisomerase I damage affected protein 7">
    <location>
        <begin position="1"/>
        <end position="636"/>
    </location>
</feature>
<feature type="transmembrane region" description="Helical" evidence="3">
    <location>
        <begin position="457"/>
        <end position="477"/>
    </location>
</feature>
<feature type="region of interest" description="Disordered" evidence="4">
    <location>
        <begin position="1"/>
        <end position="33"/>
    </location>
</feature>
<feature type="region of interest" description="Disordered" evidence="4">
    <location>
        <begin position="87"/>
        <end position="109"/>
    </location>
</feature>
<feature type="region of interest" description="Disordered" evidence="4">
    <location>
        <begin position="238"/>
        <end position="271"/>
    </location>
</feature>
<feature type="region of interest" description="Disordered" evidence="4">
    <location>
        <begin position="299"/>
        <end position="326"/>
    </location>
</feature>
<feature type="region of interest" description="Disordered" evidence="4">
    <location>
        <begin position="339"/>
        <end position="362"/>
    </location>
</feature>
<feature type="region of interest" description="Disordered" evidence="4">
    <location>
        <begin position="510"/>
        <end position="551"/>
    </location>
</feature>
<feature type="compositionally biased region" description="Polar residues" evidence="4">
    <location>
        <begin position="1"/>
        <end position="18"/>
    </location>
</feature>
<feature type="compositionally biased region" description="Low complexity" evidence="4">
    <location>
        <begin position="19"/>
        <end position="33"/>
    </location>
</feature>
<feature type="compositionally biased region" description="Low complexity" evidence="4">
    <location>
        <begin position="87"/>
        <end position="108"/>
    </location>
</feature>
<feature type="compositionally biased region" description="Polar residues" evidence="4">
    <location>
        <begin position="510"/>
        <end position="541"/>
    </location>
</feature>
<feature type="modified residue" description="Phosphoserine" evidence="2">
    <location>
        <position position="628"/>
    </location>
</feature>
<feature type="glycosylation site" description="N-linked (GlcNAc...) asparagine" evidence="3">
    <location>
        <position position="4"/>
    </location>
</feature>
<feature type="glycosylation site" description="N-linked (GlcNAc...) asparagine" evidence="3">
    <location>
        <position position="257"/>
    </location>
</feature>
<feature type="glycosylation site" description="N-linked (GlcNAc...) asparagine" evidence="3">
    <location>
        <position position="492"/>
    </location>
</feature>
<feature type="glycosylation site" description="N-linked (GlcNAc...) asparagine" evidence="3">
    <location>
        <position position="557"/>
    </location>
</feature>
<feature type="glycosylation site" description="N-linked (GlcNAc...) asparagine" evidence="3">
    <location>
        <position position="562"/>
    </location>
</feature>
<feature type="glycosylation site" description="N-linked (GlcNAc...) asparagine" evidence="3">
    <location>
        <position position="626"/>
    </location>
</feature>
<feature type="cross-link" description="Glycyl lysine isopeptide (Lys-Gly) (interchain with G-Cter in ubiquitin)" evidence="2">
    <location>
        <position position="512"/>
    </location>
</feature>
<protein>
    <recommendedName>
        <fullName>Topoisomerase I damage affected protein 7</fullName>
    </recommendedName>
</protein>
<accession>E7KH03</accession>
<comment type="subcellular location">
    <subcellularLocation>
        <location evidence="1">Vacuole membrane</location>
        <topology evidence="1">Single-pass membrane protein</topology>
    </subcellularLocation>
</comment>
<comment type="similarity">
    <text evidence="5">Belongs to the TDA7 family.</text>
</comment>
<organism>
    <name type="scientific">Saccharomyces cerevisiae (strain AWRI796)</name>
    <name type="common">Baker's yeast</name>
    <dbReference type="NCBI Taxonomy" id="764097"/>
    <lineage>
        <taxon>Eukaryota</taxon>
        <taxon>Fungi</taxon>
        <taxon>Dikarya</taxon>
        <taxon>Ascomycota</taxon>
        <taxon>Saccharomycotina</taxon>
        <taxon>Saccharomycetes</taxon>
        <taxon>Saccharomycetales</taxon>
        <taxon>Saccharomycetaceae</taxon>
        <taxon>Saccharomyces</taxon>
    </lineage>
</organism>
<dbReference type="EMBL" id="ADVS01000042">
    <property type="protein sequence ID" value="EGA73320.1"/>
    <property type="molecule type" value="Genomic_DNA"/>
</dbReference>
<dbReference type="SMR" id="E7KH03"/>
<dbReference type="GlyCosmos" id="E7KH03">
    <property type="glycosylation" value="6 sites, No reported glycans"/>
</dbReference>
<dbReference type="HOGENOM" id="CLU_029057_0_0_1"/>
<dbReference type="OMA" id="FYQHWLD"/>
<dbReference type="OrthoDB" id="4036548at2759"/>
<dbReference type="GO" id="GO:0005774">
    <property type="term" value="C:vacuolar membrane"/>
    <property type="evidence" value="ECO:0007669"/>
    <property type="project" value="UniProtKB-SubCell"/>
</dbReference>
<gene>
    <name type="primary">TDA7</name>
    <name type="ORF">AWRI796_4042</name>
</gene>
<sequence>MNSNSTIGRTTLGESDTISLSFSEPSSSLNSRSTDVVFASTSTLVPQQGSLTSLPPVSSTATPTYYSTSLTYDETLHTSIDVSSTSTLVSSTDSSSSSEQDTYSSQYDPATSSYSIITPSMSIFSSTSPMSSSSSITSEWSSLTSTTPTLSSSATSLSSSWSSLSSPSSLLVSSSLSLSLSSSYSDTKLFSFDSRSSIFSPSTPTVISPSYTYLSSISATSFQISTTSELSSSWFSTISSPSTTSNKDTTFPSSSRNTSTSFYSSSLSSTNDFSTISKSSKLSPSASSSTVSISTISVPTSSSVSSSSSKVPSNRPSSSSSSDDTTSAYSSTYTFQSLQSTTSSSIPPTTQTPSTSTISTSPIPTSSQVFNTVAISSSEDSKTIYYFYTQTYDITDSSTTFVTGLPTTIAVAKSEVTSFSAPSSTITADMSFYQHWLDGSLDNNKNQGTSKTNTGTIVGSVVGSVGGILICVLVVWFMLVRKRKAKRHFKENDSFCHEIGRRTGFPTTAQAKEASLQAQDSGSQQRNTETASANNPFSNEFNFKARGNPPPVPPPRNVTAMNGSFQNMRSNFMDQENRFSYGSSFTYSSLGSSTQGGFSTLSSNSIRLGRGLDNDISHDERNTVQNNSQGFLREII</sequence>